<organism>
    <name type="scientific">Streptococcus pneumoniae (strain CGSP14)</name>
    <dbReference type="NCBI Taxonomy" id="516950"/>
    <lineage>
        <taxon>Bacteria</taxon>
        <taxon>Bacillati</taxon>
        <taxon>Bacillota</taxon>
        <taxon>Bacilli</taxon>
        <taxon>Lactobacillales</taxon>
        <taxon>Streptococcaceae</taxon>
        <taxon>Streptococcus</taxon>
    </lineage>
</organism>
<feature type="chain" id="PRO_1000142047" description="Large ribosomal subunit protein uL24">
    <location>
        <begin position="1"/>
        <end position="101"/>
    </location>
</feature>
<evidence type="ECO:0000255" key="1">
    <source>
        <dbReference type="HAMAP-Rule" id="MF_01326"/>
    </source>
</evidence>
<evidence type="ECO:0000305" key="2"/>
<name>RL24_STRPS</name>
<dbReference type="EMBL" id="CP001033">
    <property type="protein sequence ID" value="ACB89481.1"/>
    <property type="molecule type" value="Genomic_DNA"/>
</dbReference>
<dbReference type="RefSeq" id="WP_000497691.1">
    <property type="nucleotide sequence ID" value="NC_010582.1"/>
</dbReference>
<dbReference type="SMR" id="B2IS51"/>
<dbReference type="GeneID" id="93738968"/>
<dbReference type="KEGG" id="spw:SPCG_0229"/>
<dbReference type="HOGENOM" id="CLU_093315_2_0_9"/>
<dbReference type="GO" id="GO:1990904">
    <property type="term" value="C:ribonucleoprotein complex"/>
    <property type="evidence" value="ECO:0007669"/>
    <property type="project" value="UniProtKB-KW"/>
</dbReference>
<dbReference type="GO" id="GO:0005840">
    <property type="term" value="C:ribosome"/>
    <property type="evidence" value="ECO:0007669"/>
    <property type="project" value="UniProtKB-KW"/>
</dbReference>
<dbReference type="GO" id="GO:0019843">
    <property type="term" value="F:rRNA binding"/>
    <property type="evidence" value="ECO:0007669"/>
    <property type="project" value="UniProtKB-UniRule"/>
</dbReference>
<dbReference type="GO" id="GO:0003735">
    <property type="term" value="F:structural constituent of ribosome"/>
    <property type="evidence" value="ECO:0007669"/>
    <property type="project" value="InterPro"/>
</dbReference>
<dbReference type="GO" id="GO:0006412">
    <property type="term" value="P:translation"/>
    <property type="evidence" value="ECO:0007669"/>
    <property type="project" value="UniProtKB-UniRule"/>
</dbReference>
<dbReference type="CDD" id="cd06089">
    <property type="entry name" value="KOW_RPL26"/>
    <property type="match status" value="1"/>
</dbReference>
<dbReference type="FunFam" id="2.30.30.30:FF:000004">
    <property type="entry name" value="50S ribosomal protein L24"/>
    <property type="match status" value="1"/>
</dbReference>
<dbReference type="Gene3D" id="2.30.30.30">
    <property type="match status" value="1"/>
</dbReference>
<dbReference type="HAMAP" id="MF_01326_B">
    <property type="entry name" value="Ribosomal_uL24_B"/>
    <property type="match status" value="1"/>
</dbReference>
<dbReference type="InterPro" id="IPR005824">
    <property type="entry name" value="KOW"/>
</dbReference>
<dbReference type="InterPro" id="IPR014722">
    <property type="entry name" value="Rib_uL2_dom2"/>
</dbReference>
<dbReference type="InterPro" id="IPR003256">
    <property type="entry name" value="Ribosomal_uL24"/>
</dbReference>
<dbReference type="InterPro" id="IPR005825">
    <property type="entry name" value="Ribosomal_uL24_CS"/>
</dbReference>
<dbReference type="InterPro" id="IPR041988">
    <property type="entry name" value="Ribosomal_uL24_KOW"/>
</dbReference>
<dbReference type="InterPro" id="IPR008991">
    <property type="entry name" value="Translation_prot_SH3-like_sf"/>
</dbReference>
<dbReference type="NCBIfam" id="TIGR01079">
    <property type="entry name" value="rplX_bact"/>
    <property type="match status" value="1"/>
</dbReference>
<dbReference type="PANTHER" id="PTHR12903">
    <property type="entry name" value="MITOCHONDRIAL RIBOSOMAL PROTEIN L24"/>
    <property type="match status" value="1"/>
</dbReference>
<dbReference type="Pfam" id="PF00467">
    <property type="entry name" value="KOW"/>
    <property type="match status" value="1"/>
</dbReference>
<dbReference type="Pfam" id="PF17136">
    <property type="entry name" value="ribosomal_L24"/>
    <property type="match status" value="1"/>
</dbReference>
<dbReference type="SMART" id="SM00739">
    <property type="entry name" value="KOW"/>
    <property type="match status" value="1"/>
</dbReference>
<dbReference type="SUPFAM" id="SSF50104">
    <property type="entry name" value="Translation proteins SH3-like domain"/>
    <property type="match status" value="1"/>
</dbReference>
<dbReference type="PROSITE" id="PS01108">
    <property type="entry name" value="RIBOSOMAL_L24"/>
    <property type="match status" value="1"/>
</dbReference>
<keyword id="KW-0687">Ribonucleoprotein</keyword>
<keyword id="KW-0689">Ribosomal protein</keyword>
<keyword id="KW-0694">RNA-binding</keyword>
<keyword id="KW-0699">rRNA-binding</keyword>
<sequence length="101" mass="10991">MFVKKGDKVRVIAGKDKGTEAVVLTALPKVNKVIVEGVNIVKKHQRPTNELPQGGIIEKEAAIHVSNVQVLDKNGVAGRVGYKFVDGKKVRYNKKSGEVLD</sequence>
<proteinExistence type="inferred from homology"/>
<gene>
    <name evidence="1" type="primary">rplX</name>
    <name type="ordered locus">SPCG_0229</name>
</gene>
<protein>
    <recommendedName>
        <fullName evidence="1">Large ribosomal subunit protein uL24</fullName>
    </recommendedName>
    <alternativeName>
        <fullName evidence="2">50S ribosomal protein L24</fullName>
    </alternativeName>
</protein>
<comment type="function">
    <text evidence="1">One of two assembly initiator proteins, it binds directly to the 5'-end of the 23S rRNA, where it nucleates assembly of the 50S subunit.</text>
</comment>
<comment type="function">
    <text evidence="1">One of the proteins that surrounds the polypeptide exit tunnel on the outside of the subunit.</text>
</comment>
<comment type="subunit">
    <text evidence="1">Part of the 50S ribosomal subunit.</text>
</comment>
<comment type="similarity">
    <text evidence="1">Belongs to the universal ribosomal protein uL24 family.</text>
</comment>
<accession>B2IS51</accession>
<reference key="1">
    <citation type="journal article" date="2009" name="BMC Genomics">
        <title>Genome evolution driven by host adaptations results in a more virulent and antimicrobial-resistant Streptococcus pneumoniae serotype 14.</title>
        <authorList>
            <person name="Ding F."/>
            <person name="Tang P."/>
            <person name="Hsu M.-H."/>
            <person name="Cui P."/>
            <person name="Hu S."/>
            <person name="Yu J."/>
            <person name="Chiu C.-H."/>
        </authorList>
    </citation>
    <scope>NUCLEOTIDE SEQUENCE [LARGE SCALE GENOMIC DNA]</scope>
    <source>
        <strain>CGSP14</strain>
    </source>
</reference>